<keyword id="KW-0067">ATP-binding</keyword>
<keyword id="KW-0436">Ligase</keyword>
<keyword id="KW-0460">Magnesium</keyword>
<keyword id="KW-0479">Metal-binding</keyword>
<keyword id="KW-0547">Nucleotide-binding</keyword>
<keyword id="KW-0816">Tricarboxylic acid cycle</keyword>
<accession>B0BTV5</accession>
<organism>
    <name type="scientific">Actinobacillus pleuropneumoniae serotype 3 (strain JL03)</name>
    <dbReference type="NCBI Taxonomy" id="434271"/>
    <lineage>
        <taxon>Bacteria</taxon>
        <taxon>Pseudomonadati</taxon>
        <taxon>Pseudomonadota</taxon>
        <taxon>Gammaproteobacteria</taxon>
        <taxon>Pasteurellales</taxon>
        <taxon>Pasteurellaceae</taxon>
        <taxon>Actinobacillus</taxon>
    </lineage>
</organism>
<protein>
    <recommendedName>
        <fullName evidence="1">Succinate--CoA ligase [ADP-forming] subunit beta</fullName>
        <ecNumber evidence="1">6.2.1.5</ecNumber>
    </recommendedName>
    <alternativeName>
        <fullName evidence="1">Succinyl-CoA synthetase subunit beta</fullName>
        <shortName evidence="1">SCS-beta</shortName>
    </alternativeName>
</protein>
<name>SUCC_ACTPJ</name>
<proteinExistence type="inferred from homology"/>
<gene>
    <name evidence="1" type="primary">sucC</name>
    <name type="ordered locus">APJL_0479</name>
</gene>
<sequence>MNLHEYQAKQIFAQYRLPVSKGIVCHSLDDAVSAIHTLAGDTWAAKCQVHAGGRGKAGGVKLVRSEAEIREFCHQWLGQRLVTFQTDKNGQLVNTIYLEETCLIERELYLGAVIDRSSQKIVFMASNAGGMNIEDVAAQTPELIHKATIDPLTGAQAFQGRELAFKLGLSGDQIKQFAHLFVQLAKLFIEKDLALLEVNPLVLTKQGQLLCLDAKMVIDSNALYRHPELKALQDPSQEDAREADAAKWDLNYVALDGNIGCMVNGAGLAMGTMDIVKLHGGRPANFLDVGGGATKERVSEAFKLILSDQNVKAVLVNIFGGIVRCDLIAEGIIAAVNEVGINIPVIVRLEGTNAELGREILANSGLRLIAANTLTQAAQLAVKAAEGK</sequence>
<feature type="chain" id="PRO_1000129154" description="Succinate--CoA ligase [ADP-forming] subunit beta">
    <location>
        <begin position="1"/>
        <end position="388"/>
    </location>
</feature>
<feature type="binding site" evidence="1">
    <location>
        <position position="46"/>
    </location>
    <ligand>
        <name>ATP</name>
        <dbReference type="ChEBI" id="CHEBI:30616"/>
    </ligand>
</feature>
<feature type="binding site" evidence="1">
    <location>
        <begin position="53"/>
        <end position="55"/>
    </location>
    <ligand>
        <name>ATP</name>
        <dbReference type="ChEBI" id="CHEBI:30616"/>
    </ligand>
</feature>
<feature type="binding site" evidence="1">
    <location>
        <position position="99"/>
    </location>
    <ligand>
        <name>ATP</name>
        <dbReference type="ChEBI" id="CHEBI:30616"/>
    </ligand>
</feature>
<feature type="binding site" evidence="1">
    <location>
        <position position="102"/>
    </location>
    <ligand>
        <name>ATP</name>
        <dbReference type="ChEBI" id="CHEBI:30616"/>
    </ligand>
</feature>
<feature type="binding site" evidence="1">
    <location>
        <position position="107"/>
    </location>
    <ligand>
        <name>ATP</name>
        <dbReference type="ChEBI" id="CHEBI:30616"/>
    </ligand>
</feature>
<feature type="binding site" evidence="1">
    <location>
        <position position="199"/>
    </location>
    <ligand>
        <name>Mg(2+)</name>
        <dbReference type="ChEBI" id="CHEBI:18420"/>
    </ligand>
</feature>
<feature type="binding site" evidence="1">
    <location>
        <position position="213"/>
    </location>
    <ligand>
        <name>Mg(2+)</name>
        <dbReference type="ChEBI" id="CHEBI:18420"/>
    </ligand>
</feature>
<feature type="binding site" evidence="1">
    <location>
        <position position="264"/>
    </location>
    <ligand>
        <name>substrate</name>
        <note>ligand shared with subunit alpha</note>
    </ligand>
</feature>
<feature type="binding site" evidence="1">
    <location>
        <begin position="321"/>
        <end position="323"/>
    </location>
    <ligand>
        <name>substrate</name>
        <note>ligand shared with subunit alpha</note>
    </ligand>
</feature>
<evidence type="ECO:0000255" key="1">
    <source>
        <dbReference type="HAMAP-Rule" id="MF_00558"/>
    </source>
</evidence>
<dbReference type="EC" id="6.2.1.5" evidence="1"/>
<dbReference type="EMBL" id="CP000687">
    <property type="protein sequence ID" value="ABY69060.1"/>
    <property type="molecule type" value="Genomic_DNA"/>
</dbReference>
<dbReference type="RefSeq" id="WP_005603807.1">
    <property type="nucleotide sequence ID" value="NC_010278.1"/>
</dbReference>
<dbReference type="SMR" id="B0BTV5"/>
<dbReference type="KEGG" id="apj:APJL_0479"/>
<dbReference type="HOGENOM" id="CLU_037430_0_2_6"/>
<dbReference type="UniPathway" id="UPA00223">
    <property type="reaction ID" value="UER00999"/>
</dbReference>
<dbReference type="Proteomes" id="UP000008547">
    <property type="component" value="Chromosome"/>
</dbReference>
<dbReference type="GO" id="GO:0005829">
    <property type="term" value="C:cytosol"/>
    <property type="evidence" value="ECO:0007669"/>
    <property type="project" value="TreeGrafter"/>
</dbReference>
<dbReference type="GO" id="GO:0042709">
    <property type="term" value="C:succinate-CoA ligase complex"/>
    <property type="evidence" value="ECO:0007669"/>
    <property type="project" value="TreeGrafter"/>
</dbReference>
<dbReference type="GO" id="GO:0005524">
    <property type="term" value="F:ATP binding"/>
    <property type="evidence" value="ECO:0007669"/>
    <property type="project" value="UniProtKB-UniRule"/>
</dbReference>
<dbReference type="GO" id="GO:0000287">
    <property type="term" value="F:magnesium ion binding"/>
    <property type="evidence" value="ECO:0007669"/>
    <property type="project" value="UniProtKB-UniRule"/>
</dbReference>
<dbReference type="GO" id="GO:0004775">
    <property type="term" value="F:succinate-CoA ligase (ADP-forming) activity"/>
    <property type="evidence" value="ECO:0007669"/>
    <property type="project" value="UniProtKB-UniRule"/>
</dbReference>
<dbReference type="GO" id="GO:0004776">
    <property type="term" value="F:succinate-CoA ligase (GDP-forming) activity"/>
    <property type="evidence" value="ECO:0007669"/>
    <property type="project" value="RHEA"/>
</dbReference>
<dbReference type="GO" id="GO:0006104">
    <property type="term" value="P:succinyl-CoA metabolic process"/>
    <property type="evidence" value="ECO:0007669"/>
    <property type="project" value="TreeGrafter"/>
</dbReference>
<dbReference type="GO" id="GO:0006099">
    <property type="term" value="P:tricarboxylic acid cycle"/>
    <property type="evidence" value="ECO:0007669"/>
    <property type="project" value="UniProtKB-UniRule"/>
</dbReference>
<dbReference type="FunFam" id="3.30.1490.20:FF:000002">
    <property type="entry name" value="Succinate--CoA ligase [ADP-forming] subunit beta"/>
    <property type="match status" value="1"/>
</dbReference>
<dbReference type="FunFam" id="3.30.470.20:FF:000002">
    <property type="entry name" value="Succinate--CoA ligase [ADP-forming] subunit beta"/>
    <property type="match status" value="1"/>
</dbReference>
<dbReference type="FunFam" id="3.40.50.261:FF:000001">
    <property type="entry name" value="Succinate--CoA ligase [ADP-forming] subunit beta"/>
    <property type="match status" value="1"/>
</dbReference>
<dbReference type="Gene3D" id="3.30.1490.20">
    <property type="entry name" value="ATP-grasp fold, A domain"/>
    <property type="match status" value="1"/>
</dbReference>
<dbReference type="Gene3D" id="3.30.470.20">
    <property type="entry name" value="ATP-grasp fold, B domain"/>
    <property type="match status" value="1"/>
</dbReference>
<dbReference type="Gene3D" id="3.40.50.261">
    <property type="entry name" value="Succinyl-CoA synthetase domains"/>
    <property type="match status" value="1"/>
</dbReference>
<dbReference type="HAMAP" id="MF_00558">
    <property type="entry name" value="Succ_CoA_beta"/>
    <property type="match status" value="1"/>
</dbReference>
<dbReference type="InterPro" id="IPR013650">
    <property type="entry name" value="ATP-grasp_succ-CoA_synth-type"/>
</dbReference>
<dbReference type="InterPro" id="IPR013815">
    <property type="entry name" value="ATP_grasp_subdomain_1"/>
</dbReference>
<dbReference type="InterPro" id="IPR017866">
    <property type="entry name" value="Succ-CoA_synthase_bsu_CS"/>
</dbReference>
<dbReference type="InterPro" id="IPR005811">
    <property type="entry name" value="SUCC_ACL_C"/>
</dbReference>
<dbReference type="InterPro" id="IPR005809">
    <property type="entry name" value="Succ_CoA_ligase-like_bsu"/>
</dbReference>
<dbReference type="InterPro" id="IPR016102">
    <property type="entry name" value="Succinyl-CoA_synth-like"/>
</dbReference>
<dbReference type="NCBIfam" id="NF001913">
    <property type="entry name" value="PRK00696.1"/>
    <property type="match status" value="1"/>
</dbReference>
<dbReference type="NCBIfam" id="TIGR01016">
    <property type="entry name" value="sucCoAbeta"/>
    <property type="match status" value="1"/>
</dbReference>
<dbReference type="PANTHER" id="PTHR11815:SF10">
    <property type="entry name" value="SUCCINATE--COA LIGASE [GDP-FORMING] SUBUNIT BETA, MITOCHONDRIAL"/>
    <property type="match status" value="1"/>
</dbReference>
<dbReference type="PANTHER" id="PTHR11815">
    <property type="entry name" value="SUCCINYL-COA SYNTHETASE BETA CHAIN"/>
    <property type="match status" value="1"/>
</dbReference>
<dbReference type="Pfam" id="PF08442">
    <property type="entry name" value="ATP-grasp_2"/>
    <property type="match status" value="1"/>
</dbReference>
<dbReference type="Pfam" id="PF00549">
    <property type="entry name" value="Ligase_CoA"/>
    <property type="match status" value="1"/>
</dbReference>
<dbReference type="PIRSF" id="PIRSF001554">
    <property type="entry name" value="SucCS_beta"/>
    <property type="match status" value="1"/>
</dbReference>
<dbReference type="SUPFAM" id="SSF56059">
    <property type="entry name" value="Glutathione synthetase ATP-binding domain-like"/>
    <property type="match status" value="1"/>
</dbReference>
<dbReference type="SUPFAM" id="SSF52210">
    <property type="entry name" value="Succinyl-CoA synthetase domains"/>
    <property type="match status" value="1"/>
</dbReference>
<dbReference type="PROSITE" id="PS01217">
    <property type="entry name" value="SUCCINYL_COA_LIG_3"/>
    <property type="match status" value="1"/>
</dbReference>
<reference key="1">
    <citation type="journal article" date="2008" name="PLoS ONE">
        <title>Genome biology of Actinobacillus pleuropneumoniae JL03, an isolate of serotype 3 prevalent in China.</title>
        <authorList>
            <person name="Xu Z."/>
            <person name="Zhou Y."/>
            <person name="Li L."/>
            <person name="Zhou R."/>
            <person name="Xiao S."/>
            <person name="Wan Y."/>
            <person name="Zhang S."/>
            <person name="Wang K."/>
            <person name="Li W."/>
            <person name="Li L."/>
            <person name="Jin H."/>
            <person name="Kang M."/>
            <person name="Dalai B."/>
            <person name="Li T."/>
            <person name="Liu L."/>
            <person name="Cheng Y."/>
            <person name="Zhang L."/>
            <person name="Xu T."/>
            <person name="Zheng H."/>
            <person name="Pu S."/>
            <person name="Wang B."/>
            <person name="Gu W."/>
            <person name="Zhang X.L."/>
            <person name="Zhu G.-F."/>
            <person name="Wang S."/>
            <person name="Zhao G.-P."/>
            <person name="Chen H."/>
        </authorList>
    </citation>
    <scope>NUCLEOTIDE SEQUENCE [LARGE SCALE GENOMIC DNA]</scope>
    <source>
        <strain>JL03</strain>
    </source>
</reference>
<comment type="function">
    <text evidence="1">Succinyl-CoA synthetase functions in the citric acid cycle (TCA), coupling the hydrolysis of succinyl-CoA to the synthesis of either ATP or GTP and thus represents the only step of substrate-level phosphorylation in the TCA. The beta subunit provides nucleotide specificity of the enzyme and binds the substrate succinate, while the binding sites for coenzyme A and phosphate are found in the alpha subunit.</text>
</comment>
<comment type="catalytic activity">
    <reaction evidence="1">
        <text>succinate + ATP + CoA = succinyl-CoA + ADP + phosphate</text>
        <dbReference type="Rhea" id="RHEA:17661"/>
        <dbReference type="ChEBI" id="CHEBI:30031"/>
        <dbReference type="ChEBI" id="CHEBI:30616"/>
        <dbReference type="ChEBI" id="CHEBI:43474"/>
        <dbReference type="ChEBI" id="CHEBI:57287"/>
        <dbReference type="ChEBI" id="CHEBI:57292"/>
        <dbReference type="ChEBI" id="CHEBI:456216"/>
        <dbReference type="EC" id="6.2.1.5"/>
    </reaction>
    <physiologicalReaction direction="right-to-left" evidence="1">
        <dbReference type="Rhea" id="RHEA:17663"/>
    </physiologicalReaction>
</comment>
<comment type="catalytic activity">
    <reaction evidence="1">
        <text>GTP + succinate + CoA = succinyl-CoA + GDP + phosphate</text>
        <dbReference type="Rhea" id="RHEA:22120"/>
        <dbReference type="ChEBI" id="CHEBI:30031"/>
        <dbReference type="ChEBI" id="CHEBI:37565"/>
        <dbReference type="ChEBI" id="CHEBI:43474"/>
        <dbReference type="ChEBI" id="CHEBI:57287"/>
        <dbReference type="ChEBI" id="CHEBI:57292"/>
        <dbReference type="ChEBI" id="CHEBI:58189"/>
    </reaction>
    <physiologicalReaction direction="right-to-left" evidence="1">
        <dbReference type="Rhea" id="RHEA:22122"/>
    </physiologicalReaction>
</comment>
<comment type="cofactor">
    <cofactor evidence="1">
        <name>Mg(2+)</name>
        <dbReference type="ChEBI" id="CHEBI:18420"/>
    </cofactor>
    <text evidence="1">Binds 1 Mg(2+) ion per subunit.</text>
</comment>
<comment type="pathway">
    <text evidence="1">Carbohydrate metabolism; tricarboxylic acid cycle; succinate from succinyl-CoA (ligase route): step 1/1.</text>
</comment>
<comment type="subunit">
    <text evidence="1">Heterotetramer of two alpha and two beta subunits.</text>
</comment>
<comment type="similarity">
    <text evidence="1">Belongs to the succinate/malate CoA ligase beta subunit family.</text>
</comment>